<feature type="chain" id="PRO_0000160249" description="Malolactic enzyme">
    <location>
        <begin position="1"/>
        <end position="540"/>
    </location>
</feature>
<feature type="active site" description="Proton donor" evidence="1">
    <location>
        <position position="90"/>
    </location>
</feature>
<feature type="active site" description="Proton acceptor" evidence="1">
    <location>
        <position position="163"/>
    </location>
</feature>
<feature type="binding site" evidence="1">
    <location>
        <position position="163"/>
    </location>
    <ligand>
        <name>substrate</name>
    </ligand>
</feature>
<feature type="binding site" evidence="1">
    <location>
        <position position="234"/>
    </location>
    <ligand>
        <name>Mn(2+)</name>
        <dbReference type="ChEBI" id="CHEBI:29035"/>
    </ligand>
</feature>
<feature type="binding site" evidence="1">
    <location>
        <position position="235"/>
    </location>
    <ligand>
        <name>Mn(2+)</name>
        <dbReference type="ChEBI" id="CHEBI:29035"/>
    </ligand>
</feature>
<feature type="binding site" evidence="1">
    <location>
        <position position="258"/>
    </location>
    <ligand>
        <name>Mn(2+)</name>
        <dbReference type="ChEBI" id="CHEBI:29035"/>
    </ligand>
</feature>
<feature type="binding site" evidence="1">
    <location>
        <begin position="291"/>
        <end position="294"/>
    </location>
    <ligand>
        <name>NAD(+)</name>
        <dbReference type="ChEBI" id="CHEBI:57540"/>
    </ligand>
</feature>
<feature type="binding site" evidence="1">
    <location>
        <position position="403"/>
    </location>
    <ligand>
        <name>NAD(+)</name>
        <dbReference type="ChEBI" id="CHEBI:57540"/>
    </ligand>
</feature>
<feature type="binding site" evidence="1">
    <location>
        <position position="448"/>
    </location>
    <ligand>
        <name>NAD(+)</name>
        <dbReference type="ChEBI" id="CHEBI:57540"/>
    </ligand>
</feature>
<feature type="binding site" evidence="1">
    <location>
        <position position="448"/>
    </location>
    <ligand>
        <name>substrate</name>
    </ligand>
</feature>
<feature type="sequence conflict" description="In Ref. 1; CAA53589." evidence="6" ref="1">
    <original>E</original>
    <variation>V</variation>
    <location>
        <position position="44"/>
    </location>
</feature>
<feature type="sequence conflict" description="In Ref. 1; CAA53589." evidence="6" ref="1">
    <original>N</original>
    <variation>S</variation>
    <location>
        <position position="128"/>
    </location>
</feature>
<feature type="sequence conflict" description="In Ref. 1; CAA53589." evidence="6" ref="1">
    <original>Y</original>
    <variation>H</variation>
    <location>
        <position position="452"/>
    </location>
</feature>
<evidence type="ECO:0000250" key="1">
    <source>
        <dbReference type="UniProtKB" id="P40927"/>
    </source>
</evidence>
<evidence type="ECO:0000250" key="2">
    <source>
        <dbReference type="UniProtKB" id="Q48796"/>
    </source>
</evidence>
<evidence type="ECO:0000269" key="3">
    <source>
    </source>
</evidence>
<evidence type="ECO:0000269" key="4">
    <source>
    </source>
</evidence>
<evidence type="ECO:0000303" key="5">
    <source>
    </source>
</evidence>
<evidence type="ECO:0000305" key="6"/>
<comment type="function">
    <text evidence="3 4">Involved in the malolactic fermentation (MLF) of wine, which results in a natural decrease in acidity and favorable changes in wine flavors. Catalyzes the decarboxylation of L-malate to L-lactate.</text>
</comment>
<comment type="catalytic activity">
    <reaction evidence="2">
        <text>(S)-malate + H(+) = (S)-lactate + CO2</text>
        <dbReference type="Rhea" id="RHEA:46276"/>
        <dbReference type="ChEBI" id="CHEBI:15378"/>
        <dbReference type="ChEBI" id="CHEBI:15589"/>
        <dbReference type="ChEBI" id="CHEBI:16526"/>
        <dbReference type="ChEBI" id="CHEBI:16651"/>
        <dbReference type="EC" id="4.1.1.101"/>
    </reaction>
</comment>
<comment type="cofactor">
    <cofactor evidence="2">
        <name>Mn(2+)</name>
        <dbReference type="ChEBI" id="CHEBI:29035"/>
    </cofactor>
</comment>
<comment type="cofactor">
    <cofactor evidence="2">
        <name>NAD(+)</name>
        <dbReference type="ChEBI" id="CHEBI:57540"/>
    </cofactor>
</comment>
<comment type="subunit">
    <text evidence="2">Homodimer.</text>
</comment>
<comment type="similarity">
    <text evidence="6">Belongs to the malic enzymes family.</text>
</comment>
<comment type="sequence caution" evidence="6">
    <conflict type="erroneous initiation">
        <sequence resource="EMBL-CDS" id="CAA50716"/>
    </conflict>
    <text>Truncated N-terminus.</text>
</comment>
<protein>
    <recommendedName>
        <fullName evidence="5">Malolactic enzyme</fullName>
        <shortName evidence="5">MLE</shortName>
        <ecNumber evidence="2">4.1.1.101</ecNumber>
    </recommendedName>
</protein>
<sequence length="540" mass="59517">MRAHEILNNPFLNKGTAFTMKERQELGLIGLLPPTVQTIEEQAEQTYEQYLTKPSDLEKRHFLMEIFNTNRTLFYYLFNKHIVEFNPVVYDPTIADTIENYSHLFVDPQYAAYLDINHPENITETLKNAAGDREIRLIVVTDAEGILGIGDWGTQGVDISVGKLMIYTAAAGIDPASVLPVVIDAGTNRKELLEDHLYLGNHQERIYGDQYYSFVDQFVETAESIFPKLYLHWEDFGRSNAATILNNYKTKIPTFNDDIQGTGIVVLGGIFGSLDITGEKLTDQVYLCYGGGSAGAGIAGRVHAEMVSEGLSEEEAYKHFFMIDQQGLLFDDMEDLTPAQKPFAKKRADYKDAGDMTDLLNVVKTVKPTILVGTSTNPGAFTKEVVEAMCANTERPVIFPISNPTKKMETTAEQVIEWSDGKAFVATGVPSGTISYKGVDYQIGQANNSLIYPGLGLGMLASEAKLLTDEMIGAAAHSLSGLVDPGKPGAPVLPPFEFVADVSIKVAEAVAKKAQEQGLTESKETDMAKAVRDLKWYPEY</sequence>
<proteinExistence type="inferred from homology"/>
<reference key="1">
    <citation type="journal article" date="1993" name="FEBS Lett.">
        <title>Cloning, sequence and expression of the gene encoding the malolactic enzyme from Lactococcus lactis.</title>
        <authorList>
            <person name="Ansanay V."/>
            <person name="Dequin S."/>
            <person name="Blondin B."/>
            <person name="Barre P."/>
        </authorList>
    </citation>
    <scope>NUCLEOTIDE SEQUENCE [GENOMIC DNA]</scope>
    <scope>FUNCTION</scope>
    <source>
        <strain>IL1441</strain>
    </source>
</reference>
<reference key="2">
    <citation type="journal article" date="1994" name="FEMS Microbiol. Lett.">
        <title>Cloning and sequence analysis of the gene encoding Lactococcus lactis malolactic enzyme: relationships with malic enzymes.</title>
        <authorList>
            <person name="Denayrolles M."/>
            <person name="Aigle M."/>
            <person name="Lonvaud-Funel A."/>
        </authorList>
    </citation>
    <scope>NUCLEOTIDE SEQUENCE [GENOMIC DNA]</scope>
    <scope>FUNCTION</scope>
    <source>
        <strain>IL1441</strain>
    </source>
</reference>
<reference key="3">
    <citation type="journal article" date="2001" name="Genome Res.">
        <title>The complete genome sequence of the lactic acid bacterium Lactococcus lactis ssp. lactis IL1403.</title>
        <authorList>
            <person name="Bolotin A."/>
            <person name="Wincker P."/>
            <person name="Mauger S."/>
            <person name="Jaillon O."/>
            <person name="Malarme K."/>
            <person name="Weissenbach J."/>
            <person name="Ehrlich S.D."/>
            <person name="Sorokin A."/>
        </authorList>
    </citation>
    <scope>NUCLEOTIDE SEQUENCE [LARGE SCALE GENOMIC DNA]</scope>
    <source>
        <strain>IL1403</strain>
    </source>
</reference>
<keyword id="KW-0456">Lyase</keyword>
<keyword id="KW-0464">Manganese</keyword>
<keyword id="KW-0479">Metal-binding</keyword>
<keyword id="KW-0520">NAD</keyword>
<keyword id="KW-1185">Reference proteome</keyword>
<dbReference type="EC" id="4.1.1.101" evidence="2"/>
<dbReference type="EMBL" id="X75982">
    <property type="protein sequence ID" value="CAA53589.1"/>
    <property type="molecule type" value="Genomic_DNA"/>
</dbReference>
<dbReference type="EMBL" id="X71897">
    <property type="protein sequence ID" value="CAA50716.1"/>
    <property type="status" value="ALT_INIT"/>
    <property type="molecule type" value="Genomic_DNA"/>
</dbReference>
<dbReference type="EMBL" id="AE005176">
    <property type="protein sequence ID" value="AAK04998.1"/>
    <property type="molecule type" value="Genomic_DNA"/>
</dbReference>
<dbReference type="PIR" id="D86737">
    <property type="entry name" value="D86737"/>
</dbReference>
<dbReference type="PIR" id="S38728">
    <property type="entry name" value="S38728"/>
</dbReference>
<dbReference type="RefSeq" id="NP_267056.1">
    <property type="nucleotide sequence ID" value="NC_002662.1"/>
</dbReference>
<dbReference type="RefSeq" id="WP_010905616.1">
    <property type="nucleotide sequence ID" value="NC_002662.1"/>
</dbReference>
<dbReference type="SMR" id="Q48662"/>
<dbReference type="PaxDb" id="272623-L121483"/>
<dbReference type="EnsemblBacteria" id="AAK04998">
    <property type="protein sequence ID" value="AAK04998"/>
    <property type="gene ID" value="L121483"/>
</dbReference>
<dbReference type="KEGG" id="lla:L121483"/>
<dbReference type="PATRIC" id="fig|272623.7.peg.965"/>
<dbReference type="eggNOG" id="COG0281">
    <property type="taxonomic scope" value="Bacteria"/>
</dbReference>
<dbReference type="HOGENOM" id="CLU_011405_5_2_9"/>
<dbReference type="OrthoDB" id="3314528at2"/>
<dbReference type="BRENDA" id="4.1.1.101">
    <property type="organism ID" value="2903"/>
</dbReference>
<dbReference type="Proteomes" id="UP000002196">
    <property type="component" value="Chromosome"/>
</dbReference>
<dbReference type="GO" id="GO:0005829">
    <property type="term" value="C:cytosol"/>
    <property type="evidence" value="ECO:0007669"/>
    <property type="project" value="TreeGrafter"/>
</dbReference>
<dbReference type="GO" id="GO:0016831">
    <property type="term" value="F:carboxy-lyase activity"/>
    <property type="evidence" value="ECO:0000250"/>
    <property type="project" value="UniProtKB"/>
</dbReference>
<dbReference type="GO" id="GO:0004470">
    <property type="term" value="F:malic enzyme activity"/>
    <property type="evidence" value="ECO:0007669"/>
    <property type="project" value="InterPro"/>
</dbReference>
<dbReference type="GO" id="GO:0043883">
    <property type="term" value="F:malolactic enzyme activity"/>
    <property type="evidence" value="ECO:0007669"/>
    <property type="project" value="UniProtKB-EC"/>
</dbReference>
<dbReference type="GO" id="GO:0030145">
    <property type="term" value="F:manganese ion binding"/>
    <property type="evidence" value="ECO:0000250"/>
    <property type="project" value="UniProtKB"/>
</dbReference>
<dbReference type="GO" id="GO:0051287">
    <property type="term" value="F:NAD binding"/>
    <property type="evidence" value="ECO:0000250"/>
    <property type="project" value="UniProtKB"/>
</dbReference>
<dbReference type="GO" id="GO:0016616">
    <property type="term" value="F:oxidoreductase activity, acting on the CH-OH group of donors, NAD or NADP as acceptor"/>
    <property type="evidence" value="ECO:0007669"/>
    <property type="project" value="InterPro"/>
</dbReference>
<dbReference type="GO" id="GO:0006108">
    <property type="term" value="P:malate metabolic process"/>
    <property type="evidence" value="ECO:0007669"/>
    <property type="project" value="TreeGrafter"/>
</dbReference>
<dbReference type="GO" id="GO:0043464">
    <property type="term" value="P:malolactic fermentation"/>
    <property type="evidence" value="ECO:0000250"/>
    <property type="project" value="UniProtKB"/>
</dbReference>
<dbReference type="FunFam" id="3.40.50.10380:FF:000001">
    <property type="entry name" value="NAD-dependent malic enzyme"/>
    <property type="match status" value="1"/>
</dbReference>
<dbReference type="FunFam" id="3.40.50.720:FF:000182">
    <property type="entry name" value="NAD-dependent malic enzyme"/>
    <property type="match status" value="1"/>
</dbReference>
<dbReference type="Gene3D" id="3.40.50.10380">
    <property type="entry name" value="Malic enzyme, N-terminal domain"/>
    <property type="match status" value="1"/>
</dbReference>
<dbReference type="Gene3D" id="3.40.50.720">
    <property type="entry name" value="NAD(P)-binding Rossmann-like Domain"/>
    <property type="match status" value="1"/>
</dbReference>
<dbReference type="InterPro" id="IPR046346">
    <property type="entry name" value="Aminoacid_DH-like_N_sf"/>
</dbReference>
<dbReference type="InterPro" id="IPR015884">
    <property type="entry name" value="Malic_enzyme_CS"/>
</dbReference>
<dbReference type="InterPro" id="IPR012301">
    <property type="entry name" value="Malic_N_dom"/>
</dbReference>
<dbReference type="InterPro" id="IPR037062">
    <property type="entry name" value="Malic_N_dom_sf"/>
</dbReference>
<dbReference type="InterPro" id="IPR012302">
    <property type="entry name" value="Malic_NAD-bd"/>
</dbReference>
<dbReference type="InterPro" id="IPR001891">
    <property type="entry name" value="Malic_OxRdtase"/>
</dbReference>
<dbReference type="InterPro" id="IPR048182">
    <property type="entry name" value="Malolactic_enz"/>
</dbReference>
<dbReference type="InterPro" id="IPR036291">
    <property type="entry name" value="NAD(P)-bd_dom_sf"/>
</dbReference>
<dbReference type="NCBIfam" id="NF041582">
    <property type="entry name" value="malolactic"/>
    <property type="match status" value="1"/>
</dbReference>
<dbReference type="NCBIfam" id="NF010052">
    <property type="entry name" value="PRK13529.1"/>
    <property type="match status" value="1"/>
</dbReference>
<dbReference type="PANTHER" id="PTHR23406">
    <property type="entry name" value="MALIC ENZYME-RELATED"/>
    <property type="match status" value="1"/>
</dbReference>
<dbReference type="PANTHER" id="PTHR23406:SF34">
    <property type="entry name" value="NAD-DEPENDENT MALIC ENZYME, MITOCHONDRIAL"/>
    <property type="match status" value="1"/>
</dbReference>
<dbReference type="Pfam" id="PF00390">
    <property type="entry name" value="malic"/>
    <property type="match status" value="1"/>
</dbReference>
<dbReference type="Pfam" id="PF03949">
    <property type="entry name" value="Malic_M"/>
    <property type="match status" value="1"/>
</dbReference>
<dbReference type="PIRSF" id="PIRSF000106">
    <property type="entry name" value="ME"/>
    <property type="match status" value="1"/>
</dbReference>
<dbReference type="PRINTS" id="PR00072">
    <property type="entry name" value="MALOXRDTASE"/>
</dbReference>
<dbReference type="SMART" id="SM01274">
    <property type="entry name" value="malic"/>
    <property type="match status" value="1"/>
</dbReference>
<dbReference type="SMART" id="SM00919">
    <property type="entry name" value="Malic_M"/>
    <property type="match status" value="1"/>
</dbReference>
<dbReference type="SUPFAM" id="SSF53223">
    <property type="entry name" value="Aminoacid dehydrogenase-like, N-terminal domain"/>
    <property type="match status" value="1"/>
</dbReference>
<dbReference type="SUPFAM" id="SSF51735">
    <property type="entry name" value="NAD(P)-binding Rossmann-fold domains"/>
    <property type="match status" value="1"/>
</dbReference>
<dbReference type="PROSITE" id="PS00331">
    <property type="entry name" value="MALIC_ENZYMES"/>
    <property type="match status" value="1"/>
</dbReference>
<organism>
    <name type="scientific">Lactococcus lactis subsp. lactis (strain IL1403)</name>
    <name type="common">Streptococcus lactis</name>
    <dbReference type="NCBI Taxonomy" id="272623"/>
    <lineage>
        <taxon>Bacteria</taxon>
        <taxon>Bacillati</taxon>
        <taxon>Bacillota</taxon>
        <taxon>Bacilli</taxon>
        <taxon>Lactobacillales</taxon>
        <taxon>Streptococcaceae</taxon>
        <taxon>Lactococcus</taxon>
    </lineage>
</organism>
<gene>
    <name evidence="5" type="primary">mleS</name>
    <name type="ordered locus">LL0900</name>
    <name type="ORF">L121483</name>
</gene>
<name>MLES_LACLA</name>
<accession>Q48662</accession>
<accession>Q48645</accession>